<dbReference type="EMBL" id="AE008923">
    <property type="protein sequence ID" value="AAM36608.1"/>
    <property type="molecule type" value="Genomic_DNA"/>
</dbReference>
<dbReference type="RefSeq" id="WP_003481873.1">
    <property type="nucleotide sequence ID" value="NC_003919.1"/>
</dbReference>
<dbReference type="SMR" id="P0A0W6"/>
<dbReference type="GeneID" id="66910891"/>
<dbReference type="KEGG" id="xac:XAC1741"/>
<dbReference type="eggNOG" id="COG2137">
    <property type="taxonomic scope" value="Bacteria"/>
</dbReference>
<dbReference type="HOGENOM" id="CLU_066607_3_2_6"/>
<dbReference type="Proteomes" id="UP000000576">
    <property type="component" value="Chromosome"/>
</dbReference>
<dbReference type="GO" id="GO:0005737">
    <property type="term" value="C:cytoplasm"/>
    <property type="evidence" value="ECO:0007669"/>
    <property type="project" value="UniProtKB-SubCell"/>
</dbReference>
<dbReference type="GO" id="GO:0006282">
    <property type="term" value="P:regulation of DNA repair"/>
    <property type="evidence" value="ECO:0007669"/>
    <property type="project" value="UniProtKB-UniRule"/>
</dbReference>
<dbReference type="Gene3D" id="1.10.10.10">
    <property type="entry name" value="Winged helix-like DNA-binding domain superfamily/Winged helix DNA-binding domain"/>
    <property type="match status" value="3"/>
</dbReference>
<dbReference type="HAMAP" id="MF_01114">
    <property type="entry name" value="RecX"/>
    <property type="match status" value="1"/>
</dbReference>
<dbReference type="InterPro" id="IPR053926">
    <property type="entry name" value="RecX_HTH_1st"/>
</dbReference>
<dbReference type="InterPro" id="IPR053924">
    <property type="entry name" value="RecX_HTH_2nd"/>
</dbReference>
<dbReference type="InterPro" id="IPR053925">
    <property type="entry name" value="RecX_HTH_3rd"/>
</dbReference>
<dbReference type="InterPro" id="IPR003783">
    <property type="entry name" value="Regulatory_RecX"/>
</dbReference>
<dbReference type="InterPro" id="IPR036388">
    <property type="entry name" value="WH-like_DNA-bd_sf"/>
</dbReference>
<dbReference type="NCBIfam" id="NF001054">
    <property type="entry name" value="PRK00117.2-1"/>
    <property type="match status" value="1"/>
</dbReference>
<dbReference type="PANTHER" id="PTHR33602">
    <property type="entry name" value="REGULATORY PROTEIN RECX FAMILY PROTEIN"/>
    <property type="match status" value="1"/>
</dbReference>
<dbReference type="PANTHER" id="PTHR33602:SF1">
    <property type="entry name" value="REGULATORY PROTEIN RECX FAMILY PROTEIN"/>
    <property type="match status" value="1"/>
</dbReference>
<dbReference type="Pfam" id="PF21982">
    <property type="entry name" value="RecX_HTH1"/>
    <property type="match status" value="1"/>
</dbReference>
<dbReference type="Pfam" id="PF02631">
    <property type="entry name" value="RecX_HTH2"/>
    <property type="match status" value="1"/>
</dbReference>
<dbReference type="Pfam" id="PF21981">
    <property type="entry name" value="RecX_HTH3"/>
    <property type="match status" value="1"/>
</dbReference>
<keyword id="KW-0963">Cytoplasm</keyword>
<protein>
    <recommendedName>
        <fullName evidence="1">Regulatory protein RecX</fullName>
    </recommendedName>
</protein>
<sequence length="162" mass="18154">MDEQEPAPKRGRRFKEQTPVQRALGLLVRREHSRKELNRKLLARGIEPDAAQAAVDRLTDEGWQDDTRFAAAVVRNRAGSGYGPLHIRAELGTHGLDSEAISAALAAFEGDWTENARDLIRRRFGEQGPTDLPQRRKAADLLARRGFEGNSIRAATRFDLED</sequence>
<comment type="function">
    <text evidence="1">Modulates RecA activity.</text>
</comment>
<comment type="subcellular location">
    <subcellularLocation>
        <location evidence="1">Cytoplasm</location>
    </subcellularLocation>
</comment>
<comment type="similarity">
    <text evidence="1">Belongs to the RecX family.</text>
</comment>
<organism>
    <name type="scientific">Xanthomonas axonopodis pv. citri (strain 306)</name>
    <dbReference type="NCBI Taxonomy" id="190486"/>
    <lineage>
        <taxon>Bacteria</taxon>
        <taxon>Pseudomonadati</taxon>
        <taxon>Pseudomonadota</taxon>
        <taxon>Gammaproteobacteria</taxon>
        <taxon>Lysobacterales</taxon>
        <taxon>Lysobacteraceae</taxon>
        <taxon>Xanthomonas</taxon>
    </lineage>
</organism>
<gene>
    <name evidence="1" type="primary">recX</name>
    <name type="ordered locus">XAC1741</name>
</gene>
<accession>P0A0W6</accession>
<accession>Q9LCZ3</accession>
<reference key="1">
    <citation type="journal article" date="2002" name="Nature">
        <title>Comparison of the genomes of two Xanthomonas pathogens with differing host specificities.</title>
        <authorList>
            <person name="da Silva A.C.R."/>
            <person name="Ferro J.A."/>
            <person name="Reinach F.C."/>
            <person name="Farah C.S."/>
            <person name="Furlan L.R."/>
            <person name="Quaggio R.B."/>
            <person name="Monteiro-Vitorello C.B."/>
            <person name="Van Sluys M.A."/>
            <person name="Almeida N.F. Jr."/>
            <person name="Alves L.M.C."/>
            <person name="do Amaral A.M."/>
            <person name="Bertolini M.C."/>
            <person name="Camargo L.E.A."/>
            <person name="Camarotte G."/>
            <person name="Cannavan F."/>
            <person name="Cardozo J."/>
            <person name="Chambergo F."/>
            <person name="Ciapina L.P."/>
            <person name="Cicarelli R.M.B."/>
            <person name="Coutinho L.L."/>
            <person name="Cursino-Santos J.R."/>
            <person name="El-Dorry H."/>
            <person name="Faria J.B."/>
            <person name="Ferreira A.J.S."/>
            <person name="Ferreira R.C.C."/>
            <person name="Ferro M.I.T."/>
            <person name="Formighieri E.F."/>
            <person name="Franco M.C."/>
            <person name="Greggio C.C."/>
            <person name="Gruber A."/>
            <person name="Katsuyama A.M."/>
            <person name="Kishi L.T."/>
            <person name="Leite R.P."/>
            <person name="Lemos E.G.M."/>
            <person name="Lemos M.V.F."/>
            <person name="Locali E.C."/>
            <person name="Machado M.A."/>
            <person name="Madeira A.M.B.N."/>
            <person name="Martinez-Rossi N.M."/>
            <person name="Martins E.C."/>
            <person name="Meidanis J."/>
            <person name="Menck C.F.M."/>
            <person name="Miyaki C.Y."/>
            <person name="Moon D.H."/>
            <person name="Moreira L.M."/>
            <person name="Novo M.T.M."/>
            <person name="Okura V.K."/>
            <person name="Oliveira M.C."/>
            <person name="Oliveira V.R."/>
            <person name="Pereira H.A."/>
            <person name="Rossi A."/>
            <person name="Sena J.A.D."/>
            <person name="Silva C."/>
            <person name="de Souza R.F."/>
            <person name="Spinola L.A.F."/>
            <person name="Takita M.A."/>
            <person name="Tamura R.E."/>
            <person name="Teixeira E.C."/>
            <person name="Tezza R.I.D."/>
            <person name="Trindade dos Santos M."/>
            <person name="Truffi D."/>
            <person name="Tsai S.M."/>
            <person name="White F.F."/>
            <person name="Setubal J.C."/>
            <person name="Kitajima J.P."/>
        </authorList>
    </citation>
    <scope>NUCLEOTIDE SEQUENCE [LARGE SCALE GENOMIC DNA]</scope>
    <source>
        <strain>306</strain>
    </source>
</reference>
<feature type="chain" id="PRO_0000162495" description="Regulatory protein RecX">
    <location>
        <begin position="1"/>
        <end position="162"/>
    </location>
</feature>
<name>RECX_XANAC</name>
<evidence type="ECO:0000255" key="1">
    <source>
        <dbReference type="HAMAP-Rule" id="MF_01114"/>
    </source>
</evidence>
<proteinExistence type="inferred from homology"/>